<protein>
    <recommendedName>
        <fullName evidence="14">Large ribosomal subunit protein uL18</fullName>
    </recommendedName>
    <alternativeName>
        <fullName>60S ribosomal protein L5</fullName>
    </alternativeName>
</protein>
<keyword id="KW-0002">3D-structure</keyword>
<keyword id="KW-0007">Acetylation</keyword>
<keyword id="KW-0963">Cytoplasm</keyword>
<keyword id="KW-1024">Diamond-Blackfan anemia</keyword>
<keyword id="KW-0903">Direct protein sequencing</keyword>
<keyword id="KW-0225">Disease variant</keyword>
<keyword id="KW-1017">Isopeptide bond</keyword>
<keyword id="KW-0539">Nucleus</keyword>
<keyword id="KW-0597">Phosphoprotein</keyword>
<keyword id="KW-1267">Proteomics identification</keyword>
<keyword id="KW-1185">Reference proteome</keyword>
<keyword id="KW-0687">Ribonucleoprotein</keyword>
<keyword id="KW-0689">Ribosomal protein</keyword>
<keyword id="KW-0694">RNA-binding</keyword>
<keyword id="KW-0699">rRNA-binding</keyword>
<keyword id="KW-0832">Ubl conjugation</keyword>
<sequence>MGFVKVVKNKAYFKRYQVKFRRRREGKTDYYARKRLVIQDKNKYNTPKYRMIVRVTNRDIICQIAYARIEGDMIVCAAYAHELPKYGVKVGLTNYAAAYCTGLLLARRLLNRFGMDKIYEGQVEVTGDEYNVESIDGQPGAFTCYLDAGLARTTTGNKVFGALKGAVDGGLSIPHSTKRFPGYDSESKEFNAEVHRKHIMGQNVADYMRYLMEEDEDAYKKQFSQYIKNSVTPDMMEEMYKKAHAAIRENPVYEKKPKKEVKKKRWNRPKMSLAQKKDRVAQKKASFLRAQERAAES</sequence>
<dbReference type="EMBL" id="U14966">
    <property type="protein sequence ID" value="AAA85654.1"/>
    <property type="molecule type" value="mRNA"/>
</dbReference>
<dbReference type="EMBL" id="AF113210">
    <property type="protein sequence ID" value="AAG39281.1"/>
    <property type="molecule type" value="mRNA"/>
</dbReference>
<dbReference type="EMBL" id="AK222604">
    <property type="protein sequence ID" value="BAD96324.1"/>
    <property type="molecule type" value="mRNA"/>
</dbReference>
<dbReference type="EMBL" id="AL162740">
    <property type="status" value="NOT_ANNOTATED_CDS"/>
    <property type="molecule type" value="Genomic_DNA"/>
</dbReference>
<dbReference type="EMBL" id="BC109370">
    <property type="protein sequence ID" value="AAI09371.1"/>
    <property type="molecule type" value="mRNA"/>
</dbReference>
<dbReference type="EMBL" id="U76609">
    <property type="protein sequence ID" value="AAB18361.1"/>
    <property type="molecule type" value="mRNA"/>
</dbReference>
<dbReference type="EMBL" id="Z35312">
    <property type="status" value="NOT_ANNOTATED_CDS"/>
    <property type="molecule type" value="Genomic_DNA"/>
</dbReference>
<dbReference type="CCDS" id="CCDS741.1"/>
<dbReference type="PIR" id="S55912">
    <property type="entry name" value="S55912"/>
</dbReference>
<dbReference type="RefSeq" id="NP_000960.2">
    <property type="nucleotide sequence ID" value="NM_000969.3"/>
</dbReference>
<dbReference type="PDB" id="4UG0">
    <property type="method" value="EM"/>
    <property type="chains" value="LD=1-297"/>
</dbReference>
<dbReference type="PDB" id="4V6X">
    <property type="method" value="EM"/>
    <property type="resolution" value="5.00 A"/>
    <property type="chains" value="CD=1-297"/>
</dbReference>
<dbReference type="PDB" id="5AJ0">
    <property type="method" value="EM"/>
    <property type="resolution" value="3.50 A"/>
    <property type="chains" value="AD=1-297"/>
</dbReference>
<dbReference type="PDB" id="5LKS">
    <property type="method" value="EM"/>
    <property type="resolution" value="3.60 A"/>
    <property type="chains" value="LD=1-297"/>
</dbReference>
<dbReference type="PDB" id="5T2C">
    <property type="method" value="EM"/>
    <property type="resolution" value="3.60 A"/>
    <property type="chains" value="G=1-297"/>
</dbReference>
<dbReference type="PDB" id="6IP5">
    <property type="method" value="EM"/>
    <property type="resolution" value="3.90 A"/>
    <property type="chains" value="1G=1-297"/>
</dbReference>
<dbReference type="PDB" id="6IP6">
    <property type="method" value="EM"/>
    <property type="resolution" value="4.50 A"/>
    <property type="chains" value="1G=1-297"/>
</dbReference>
<dbReference type="PDB" id="6IP8">
    <property type="method" value="EM"/>
    <property type="resolution" value="3.90 A"/>
    <property type="chains" value="1G=1-297"/>
</dbReference>
<dbReference type="PDB" id="6LQM">
    <property type="method" value="EM"/>
    <property type="resolution" value="3.09 A"/>
    <property type="chains" value="r=1-297"/>
</dbReference>
<dbReference type="PDB" id="6LSR">
    <property type="method" value="EM"/>
    <property type="resolution" value="3.13 A"/>
    <property type="chains" value="r=1-297"/>
</dbReference>
<dbReference type="PDB" id="6LSS">
    <property type="method" value="EM"/>
    <property type="resolution" value="3.23 A"/>
    <property type="chains" value="r=1-297"/>
</dbReference>
<dbReference type="PDB" id="6LU8">
    <property type="method" value="EM"/>
    <property type="resolution" value="3.13 A"/>
    <property type="chains" value="r=1-297"/>
</dbReference>
<dbReference type="PDB" id="6OLE">
    <property type="method" value="EM"/>
    <property type="resolution" value="3.10 A"/>
    <property type="chains" value="F=4-297"/>
</dbReference>
<dbReference type="PDB" id="6OLF">
    <property type="method" value="EM"/>
    <property type="resolution" value="3.90 A"/>
    <property type="chains" value="F=4-297"/>
</dbReference>
<dbReference type="PDB" id="6OLG">
    <property type="method" value="EM"/>
    <property type="resolution" value="3.40 A"/>
    <property type="chains" value="AD=4-297"/>
</dbReference>
<dbReference type="PDB" id="6OLI">
    <property type="method" value="EM"/>
    <property type="resolution" value="3.50 A"/>
    <property type="chains" value="F=4-297"/>
</dbReference>
<dbReference type="PDB" id="6OLZ">
    <property type="method" value="EM"/>
    <property type="resolution" value="3.90 A"/>
    <property type="chains" value="AD=4-297"/>
</dbReference>
<dbReference type="PDB" id="6OM0">
    <property type="method" value="EM"/>
    <property type="resolution" value="3.10 A"/>
    <property type="chains" value="F=4-297"/>
</dbReference>
<dbReference type="PDB" id="6OM7">
    <property type="method" value="EM"/>
    <property type="resolution" value="3.70 A"/>
    <property type="chains" value="F=4-297"/>
</dbReference>
<dbReference type="PDB" id="6QZP">
    <property type="method" value="EM"/>
    <property type="resolution" value="2.90 A"/>
    <property type="chains" value="LD=2-294"/>
</dbReference>
<dbReference type="PDB" id="6W6L">
    <property type="method" value="EM"/>
    <property type="resolution" value="3.84 A"/>
    <property type="chains" value="F=1-297"/>
</dbReference>
<dbReference type="PDB" id="6XA1">
    <property type="method" value="EM"/>
    <property type="resolution" value="2.80 A"/>
    <property type="chains" value="LD=2-291"/>
</dbReference>
<dbReference type="PDB" id="6Y0G">
    <property type="method" value="EM"/>
    <property type="resolution" value="3.20 A"/>
    <property type="chains" value="LD=1-297"/>
</dbReference>
<dbReference type="PDB" id="6Y2L">
    <property type="method" value="EM"/>
    <property type="resolution" value="3.00 A"/>
    <property type="chains" value="LD=1-297"/>
</dbReference>
<dbReference type="PDB" id="6Y57">
    <property type="method" value="EM"/>
    <property type="resolution" value="3.50 A"/>
    <property type="chains" value="LD=1-297"/>
</dbReference>
<dbReference type="PDB" id="6Y6X">
    <property type="method" value="EM"/>
    <property type="resolution" value="2.80 A"/>
    <property type="chains" value="LD=2-294"/>
</dbReference>
<dbReference type="PDB" id="6Z6L">
    <property type="method" value="EM"/>
    <property type="resolution" value="3.00 A"/>
    <property type="chains" value="LD=1-297"/>
</dbReference>
<dbReference type="PDB" id="6Z6M">
    <property type="method" value="EM"/>
    <property type="resolution" value="3.10 A"/>
    <property type="chains" value="LD=1-297"/>
</dbReference>
<dbReference type="PDB" id="6Z6N">
    <property type="method" value="EM"/>
    <property type="resolution" value="2.90 A"/>
    <property type="chains" value="LD=1-297"/>
</dbReference>
<dbReference type="PDB" id="6ZM7">
    <property type="method" value="EM"/>
    <property type="resolution" value="2.70 A"/>
    <property type="chains" value="LD=1-297"/>
</dbReference>
<dbReference type="PDB" id="6ZME">
    <property type="method" value="EM"/>
    <property type="resolution" value="3.00 A"/>
    <property type="chains" value="LD=1-297"/>
</dbReference>
<dbReference type="PDB" id="6ZMI">
    <property type="method" value="EM"/>
    <property type="resolution" value="2.60 A"/>
    <property type="chains" value="LD=1-297"/>
</dbReference>
<dbReference type="PDB" id="6ZMO">
    <property type="method" value="EM"/>
    <property type="resolution" value="3.10 A"/>
    <property type="chains" value="LD=1-297"/>
</dbReference>
<dbReference type="PDB" id="7BHP">
    <property type="method" value="EM"/>
    <property type="resolution" value="3.30 A"/>
    <property type="chains" value="LD=1-297"/>
</dbReference>
<dbReference type="PDB" id="7F5S">
    <property type="method" value="EM"/>
    <property type="resolution" value="2.72 A"/>
    <property type="chains" value="LD=1-297"/>
</dbReference>
<dbReference type="PDB" id="7OW7">
    <property type="method" value="EM"/>
    <property type="resolution" value="2.20 A"/>
    <property type="chains" value="G=1-297"/>
</dbReference>
<dbReference type="PDB" id="7QVP">
    <property type="method" value="EM"/>
    <property type="resolution" value="3.00 A"/>
    <property type="chains" value="LD/MD=1-297"/>
</dbReference>
<dbReference type="PDB" id="7XNX">
    <property type="method" value="EM"/>
    <property type="resolution" value="2.70 A"/>
    <property type="chains" value="LD=1-297"/>
</dbReference>
<dbReference type="PDB" id="7XNY">
    <property type="method" value="EM"/>
    <property type="resolution" value="2.50 A"/>
    <property type="chains" value="LD=1-297"/>
</dbReference>
<dbReference type="PDB" id="8A3D">
    <property type="method" value="EM"/>
    <property type="resolution" value="1.67 A"/>
    <property type="chains" value="G=1-297"/>
</dbReference>
<dbReference type="PDB" id="8BGU">
    <property type="method" value="EM"/>
    <property type="resolution" value="4.10 A"/>
    <property type="chains" value="A=1-297"/>
</dbReference>
<dbReference type="PDB" id="8FL0">
    <property type="method" value="EM"/>
    <property type="resolution" value="2.91 A"/>
    <property type="chains" value="SB=1-297"/>
</dbReference>
<dbReference type="PDB" id="8FL2">
    <property type="method" value="EM"/>
    <property type="resolution" value="2.67 A"/>
    <property type="chains" value="SB=1-297"/>
</dbReference>
<dbReference type="PDB" id="8FL3">
    <property type="method" value="EM"/>
    <property type="resolution" value="2.53 A"/>
    <property type="chains" value="SB=1-297"/>
</dbReference>
<dbReference type="PDB" id="8FL4">
    <property type="method" value="EM"/>
    <property type="resolution" value="2.89 A"/>
    <property type="chains" value="SB=1-297"/>
</dbReference>
<dbReference type="PDB" id="8FL6">
    <property type="method" value="EM"/>
    <property type="resolution" value="2.62 A"/>
    <property type="chains" value="SB=1-297"/>
</dbReference>
<dbReference type="PDB" id="8FL7">
    <property type="method" value="EM"/>
    <property type="resolution" value="2.55 A"/>
    <property type="chains" value="SB=1-297"/>
</dbReference>
<dbReference type="PDB" id="8FL9">
    <property type="method" value="EM"/>
    <property type="resolution" value="2.75 A"/>
    <property type="chains" value="SB=1-297"/>
</dbReference>
<dbReference type="PDB" id="8FLA">
    <property type="method" value="EM"/>
    <property type="resolution" value="2.63 A"/>
    <property type="chains" value="SB=1-297"/>
</dbReference>
<dbReference type="PDB" id="8FLB">
    <property type="method" value="EM"/>
    <property type="resolution" value="2.55 A"/>
    <property type="chains" value="SB=1-297"/>
</dbReference>
<dbReference type="PDB" id="8FLC">
    <property type="method" value="EM"/>
    <property type="resolution" value="2.76 A"/>
    <property type="chains" value="SB=1-297"/>
</dbReference>
<dbReference type="PDB" id="8FLD">
    <property type="method" value="EM"/>
    <property type="resolution" value="2.58 A"/>
    <property type="chains" value="SB=1-297"/>
</dbReference>
<dbReference type="PDB" id="8FLE">
    <property type="method" value="EM"/>
    <property type="resolution" value="2.48 A"/>
    <property type="chains" value="SB=1-297"/>
</dbReference>
<dbReference type="PDB" id="8FLF">
    <property type="method" value="EM"/>
    <property type="resolution" value="2.65 A"/>
    <property type="chains" value="SB=1-297"/>
</dbReference>
<dbReference type="PDB" id="8G5Y">
    <property type="method" value="EM"/>
    <property type="resolution" value="2.29 A"/>
    <property type="chains" value="LD=1-297"/>
</dbReference>
<dbReference type="PDB" id="8G5Z">
    <property type="method" value="EM"/>
    <property type="resolution" value="2.64 A"/>
    <property type="chains" value="LD=2-295"/>
</dbReference>
<dbReference type="PDB" id="8G60">
    <property type="method" value="EM"/>
    <property type="resolution" value="2.54 A"/>
    <property type="chains" value="LD=1-297"/>
</dbReference>
<dbReference type="PDB" id="8G61">
    <property type="method" value="EM"/>
    <property type="resolution" value="2.94 A"/>
    <property type="chains" value="LD=1-297"/>
</dbReference>
<dbReference type="PDB" id="8G6J">
    <property type="method" value="EM"/>
    <property type="resolution" value="2.80 A"/>
    <property type="chains" value="LD=1-297"/>
</dbReference>
<dbReference type="PDB" id="8GLP">
    <property type="method" value="EM"/>
    <property type="resolution" value="1.67 A"/>
    <property type="chains" value="LD=1-297"/>
</dbReference>
<dbReference type="PDB" id="8IDT">
    <property type="method" value="EM"/>
    <property type="resolution" value="2.80 A"/>
    <property type="chains" value="r=1-297"/>
</dbReference>
<dbReference type="PDB" id="8IDY">
    <property type="method" value="EM"/>
    <property type="resolution" value="3.00 A"/>
    <property type="chains" value="r=1-297"/>
</dbReference>
<dbReference type="PDB" id="8IE3">
    <property type="method" value="EM"/>
    <property type="resolution" value="3.30 A"/>
    <property type="chains" value="r=1-297"/>
</dbReference>
<dbReference type="PDB" id="8IFD">
    <property type="method" value="EM"/>
    <property type="resolution" value="2.59 A"/>
    <property type="chains" value="1G=1-297"/>
</dbReference>
<dbReference type="PDB" id="8IFE">
    <property type="method" value="EM"/>
    <property type="resolution" value="2.57 A"/>
    <property type="chains" value="1G=1-297"/>
</dbReference>
<dbReference type="PDB" id="8INE">
    <property type="method" value="EM"/>
    <property type="resolution" value="3.20 A"/>
    <property type="chains" value="r=1-297"/>
</dbReference>
<dbReference type="PDB" id="8INF">
    <property type="method" value="EM"/>
    <property type="resolution" value="3.00 A"/>
    <property type="chains" value="r=1-297"/>
</dbReference>
<dbReference type="PDB" id="8INK">
    <property type="method" value="EM"/>
    <property type="resolution" value="3.20 A"/>
    <property type="chains" value="R=1-297"/>
</dbReference>
<dbReference type="PDB" id="8IPD">
    <property type="method" value="EM"/>
    <property type="resolution" value="3.20 A"/>
    <property type="chains" value="R=1-297"/>
</dbReference>
<dbReference type="PDB" id="8IPX">
    <property type="method" value="EM"/>
    <property type="resolution" value="4.30 A"/>
    <property type="chains" value="R=1-297"/>
</dbReference>
<dbReference type="PDB" id="8IPY">
    <property type="method" value="EM"/>
    <property type="resolution" value="3.20 A"/>
    <property type="chains" value="R=1-297"/>
</dbReference>
<dbReference type="PDB" id="8IR1">
    <property type="method" value="EM"/>
    <property type="resolution" value="3.30 A"/>
    <property type="chains" value="C=1-297"/>
</dbReference>
<dbReference type="PDB" id="8IR3">
    <property type="method" value="EM"/>
    <property type="resolution" value="3.50 A"/>
    <property type="chains" value="C=1-297"/>
</dbReference>
<dbReference type="PDB" id="8JDJ">
    <property type="method" value="EM"/>
    <property type="resolution" value="2.50 A"/>
    <property type="chains" value="J=1-297"/>
</dbReference>
<dbReference type="PDB" id="8JDK">
    <property type="method" value="EM"/>
    <property type="resolution" value="2.26 A"/>
    <property type="chains" value="J=1-297"/>
</dbReference>
<dbReference type="PDB" id="8JDL">
    <property type="method" value="EM"/>
    <property type="resolution" value="2.42 A"/>
    <property type="chains" value="J=1-297"/>
</dbReference>
<dbReference type="PDB" id="8JDM">
    <property type="method" value="EM"/>
    <property type="resolution" value="2.67 A"/>
    <property type="chains" value="J=1-297"/>
</dbReference>
<dbReference type="PDB" id="8K2C">
    <property type="method" value="EM"/>
    <property type="resolution" value="2.40 A"/>
    <property type="chains" value="LD=1-297"/>
</dbReference>
<dbReference type="PDB" id="8OHD">
    <property type="method" value="EM"/>
    <property type="resolution" value="3.10 A"/>
    <property type="chains" value="LD=1-297"/>
</dbReference>
<dbReference type="PDB" id="8OJ0">
    <property type="method" value="EM"/>
    <property type="resolution" value="3.30 A"/>
    <property type="chains" value="LD=1-297"/>
</dbReference>
<dbReference type="PDB" id="8OJ5">
    <property type="method" value="EM"/>
    <property type="resolution" value="2.90 A"/>
    <property type="chains" value="LD=1-297"/>
</dbReference>
<dbReference type="PDB" id="8OJ8">
    <property type="method" value="EM"/>
    <property type="resolution" value="3.30 A"/>
    <property type="chains" value="LD=1-297"/>
</dbReference>
<dbReference type="PDB" id="8QFD">
    <property type="method" value="EM"/>
    <property type="resolution" value="2.20 A"/>
    <property type="chains" value="D=1-297"/>
</dbReference>
<dbReference type="PDB" id="8QOI">
    <property type="method" value="EM"/>
    <property type="resolution" value="1.90 A"/>
    <property type="chains" value="LD=2-294"/>
</dbReference>
<dbReference type="PDB" id="8QYX">
    <property type="method" value="EM"/>
    <property type="resolution" value="1.78 A"/>
    <property type="chains" value="G2=1-297"/>
</dbReference>
<dbReference type="PDB" id="8RL2">
    <property type="method" value="EM"/>
    <property type="resolution" value="2.84 A"/>
    <property type="chains" value="LD=1-297"/>
</dbReference>
<dbReference type="PDB" id="8UKB">
    <property type="method" value="EM"/>
    <property type="resolution" value="3.05 A"/>
    <property type="chains" value="LD=2-294"/>
</dbReference>
<dbReference type="PDB" id="8XSX">
    <property type="method" value="EM"/>
    <property type="resolution" value="2.40 A"/>
    <property type="chains" value="LD=1-297"/>
</dbReference>
<dbReference type="PDB" id="8XSY">
    <property type="method" value="EM"/>
    <property type="resolution" value="3.00 A"/>
    <property type="chains" value="LD=1-297"/>
</dbReference>
<dbReference type="PDB" id="8XSZ">
    <property type="method" value="EM"/>
    <property type="resolution" value="3.20 A"/>
    <property type="chains" value="LD=1-297"/>
</dbReference>
<dbReference type="PDB" id="8Y0W">
    <property type="method" value="EM"/>
    <property type="resolution" value="3.40 A"/>
    <property type="chains" value="LD=1-297"/>
</dbReference>
<dbReference type="PDB" id="8Y0X">
    <property type="method" value="EM"/>
    <property type="resolution" value="3.30 A"/>
    <property type="chains" value="LD=1-297"/>
</dbReference>
<dbReference type="PDB" id="8YOO">
    <property type="method" value="EM"/>
    <property type="resolution" value="2.00 A"/>
    <property type="chains" value="LD=1-297"/>
</dbReference>
<dbReference type="PDB" id="8YOP">
    <property type="method" value="EM"/>
    <property type="resolution" value="2.20 A"/>
    <property type="chains" value="LD=1-297"/>
</dbReference>
<dbReference type="PDB" id="9C3H">
    <property type="method" value="EM"/>
    <property type="resolution" value="2.00 A"/>
    <property type="chains" value="L8=1-297"/>
</dbReference>
<dbReference type="PDB" id="9G8M">
    <property type="method" value="EM"/>
    <property type="resolution" value="3.30 A"/>
    <property type="chains" value="LD=1-297"/>
</dbReference>
<dbReference type="PDB" id="9GMO">
    <property type="method" value="EM"/>
    <property type="resolution" value="2.59 A"/>
    <property type="chains" value="G=1-297"/>
</dbReference>
<dbReference type="PDBsum" id="4UG0"/>
<dbReference type="PDBsum" id="4V6X"/>
<dbReference type="PDBsum" id="5AJ0"/>
<dbReference type="PDBsum" id="5LKS"/>
<dbReference type="PDBsum" id="5T2C"/>
<dbReference type="PDBsum" id="6IP5"/>
<dbReference type="PDBsum" id="6IP6"/>
<dbReference type="PDBsum" id="6IP8"/>
<dbReference type="PDBsum" id="6LQM"/>
<dbReference type="PDBsum" id="6LSR"/>
<dbReference type="PDBsum" id="6LSS"/>
<dbReference type="PDBsum" id="6LU8"/>
<dbReference type="PDBsum" id="6OLE"/>
<dbReference type="PDBsum" id="6OLF"/>
<dbReference type="PDBsum" id="6OLG"/>
<dbReference type="PDBsum" id="6OLI"/>
<dbReference type="PDBsum" id="6OLZ"/>
<dbReference type="PDBsum" id="6OM0"/>
<dbReference type="PDBsum" id="6OM7"/>
<dbReference type="PDBsum" id="6QZP"/>
<dbReference type="PDBsum" id="6W6L"/>
<dbReference type="PDBsum" id="6XA1"/>
<dbReference type="PDBsum" id="6Y0G"/>
<dbReference type="PDBsum" id="6Y2L"/>
<dbReference type="PDBsum" id="6Y57"/>
<dbReference type="PDBsum" id="6Y6X"/>
<dbReference type="PDBsum" id="6Z6L"/>
<dbReference type="PDBsum" id="6Z6M"/>
<dbReference type="PDBsum" id="6Z6N"/>
<dbReference type="PDBsum" id="6ZM7"/>
<dbReference type="PDBsum" id="6ZME"/>
<dbReference type="PDBsum" id="6ZMI"/>
<dbReference type="PDBsum" id="6ZMO"/>
<dbReference type="PDBsum" id="7BHP"/>
<dbReference type="PDBsum" id="7F5S"/>
<dbReference type="PDBsum" id="7OW7"/>
<dbReference type="PDBsum" id="7QVP"/>
<dbReference type="PDBsum" id="7XNX"/>
<dbReference type="PDBsum" id="7XNY"/>
<dbReference type="PDBsum" id="8A3D"/>
<dbReference type="PDBsum" id="8BGU"/>
<dbReference type="PDBsum" id="8FL0"/>
<dbReference type="PDBsum" id="8FL2"/>
<dbReference type="PDBsum" id="8FL3"/>
<dbReference type="PDBsum" id="8FL4"/>
<dbReference type="PDBsum" id="8FL6"/>
<dbReference type="PDBsum" id="8FL7"/>
<dbReference type="PDBsum" id="8FL9"/>
<dbReference type="PDBsum" id="8FLA"/>
<dbReference type="PDBsum" id="8FLB"/>
<dbReference type="PDBsum" id="8FLC"/>
<dbReference type="PDBsum" id="8FLD"/>
<dbReference type="PDBsum" id="8FLE"/>
<dbReference type="PDBsum" id="8FLF"/>
<dbReference type="PDBsum" id="8G5Y"/>
<dbReference type="PDBsum" id="8G5Z"/>
<dbReference type="PDBsum" id="8G60"/>
<dbReference type="PDBsum" id="8G61"/>
<dbReference type="PDBsum" id="8G6J"/>
<dbReference type="PDBsum" id="8GLP"/>
<dbReference type="PDBsum" id="8IDT"/>
<dbReference type="PDBsum" id="8IDY"/>
<dbReference type="PDBsum" id="8IE3"/>
<dbReference type="PDBsum" id="8IFD"/>
<dbReference type="PDBsum" id="8IFE"/>
<dbReference type="PDBsum" id="8INE"/>
<dbReference type="PDBsum" id="8INF"/>
<dbReference type="PDBsum" id="8INK"/>
<dbReference type="PDBsum" id="8IPD"/>
<dbReference type="PDBsum" id="8IPX"/>
<dbReference type="PDBsum" id="8IPY"/>
<dbReference type="PDBsum" id="8IR1"/>
<dbReference type="PDBsum" id="8IR3"/>
<dbReference type="PDBsum" id="8JDJ"/>
<dbReference type="PDBsum" id="8JDK"/>
<dbReference type="PDBsum" id="8JDL"/>
<dbReference type="PDBsum" id="8JDM"/>
<dbReference type="PDBsum" id="8K2C"/>
<dbReference type="PDBsum" id="8OHD"/>
<dbReference type="PDBsum" id="8OJ0"/>
<dbReference type="PDBsum" id="8OJ5"/>
<dbReference type="PDBsum" id="8OJ8"/>
<dbReference type="PDBsum" id="8QFD"/>
<dbReference type="PDBsum" id="8QOI"/>
<dbReference type="PDBsum" id="8QYX"/>
<dbReference type="PDBsum" id="8RL2"/>
<dbReference type="PDBsum" id="8UKB"/>
<dbReference type="PDBsum" id="8XSX"/>
<dbReference type="PDBsum" id="8XSY"/>
<dbReference type="PDBsum" id="8XSZ"/>
<dbReference type="PDBsum" id="8Y0W"/>
<dbReference type="PDBsum" id="8Y0X"/>
<dbReference type="PDBsum" id="8YOO"/>
<dbReference type="PDBsum" id="8YOP"/>
<dbReference type="PDBsum" id="9C3H"/>
<dbReference type="PDBsum" id="9G8M"/>
<dbReference type="PDBsum" id="9GMO"/>
<dbReference type="EMDB" id="EMD-0948"/>
<dbReference type="EMDB" id="EMD-0963"/>
<dbReference type="EMDB" id="EMD-0964"/>
<dbReference type="EMDB" id="EMD-0978"/>
<dbReference type="EMDB" id="EMD-10668"/>
<dbReference type="EMDB" id="EMD-10674"/>
<dbReference type="EMDB" id="EMD-10690"/>
<dbReference type="EMDB" id="EMD-10709"/>
<dbReference type="EMDB" id="EMD-11098"/>
<dbReference type="EMDB" id="EMD-11099"/>
<dbReference type="EMDB" id="EMD-11100"/>
<dbReference type="EMDB" id="EMD-11288"/>
<dbReference type="EMDB" id="EMD-11289"/>
<dbReference type="EMDB" id="EMD-11292"/>
<dbReference type="EMDB" id="EMD-11299"/>
<dbReference type="EMDB" id="EMD-12189"/>
<dbReference type="EMDB" id="EMD-13094"/>
<dbReference type="EMDB" id="EMD-14181"/>
<dbReference type="EMDB" id="EMD-15113"/>
<dbReference type="EMDB" id="EMD-16036"/>
<dbReference type="EMDB" id="EMD-16880"/>
<dbReference type="EMDB" id="EMD-16902"/>
<dbReference type="EMDB" id="EMD-16905"/>
<dbReference type="EMDB" id="EMD-16908"/>
<dbReference type="EMDB" id="EMD-18382"/>
<dbReference type="EMDB" id="EMD-18539"/>
<dbReference type="EMDB" id="EMD-18765"/>
<dbReference type="EMDB" id="EMD-19330"/>
<dbReference type="EMDB" id="EMD-29263"/>
<dbReference type="EMDB" id="EMD-29265"/>
<dbReference type="EMDB" id="EMD-29266"/>
<dbReference type="EMDB" id="EMD-29267"/>
<dbReference type="EMDB" id="EMD-29268"/>
<dbReference type="EMDB" id="EMD-29269"/>
<dbReference type="EMDB" id="EMD-29271"/>
<dbReference type="EMDB" id="EMD-29272"/>
<dbReference type="EMDB" id="EMD-29273"/>
<dbReference type="EMDB" id="EMD-29274"/>
<dbReference type="EMDB" id="EMD-29275"/>
<dbReference type="EMDB" id="EMD-29276"/>
<dbReference type="EMDB" id="EMD-29277"/>
<dbReference type="EMDB" id="EMD-29757"/>
<dbReference type="EMDB" id="EMD-29758"/>
<dbReference type="EMDB" id="EMD-29759"/>
<dbReference type="EMDB" id="EMD-29760"/>
<dbReference type="EMDB" id="EMD-29771"/>
<dbReference type="EMDB" id="EMD-31465"/>
<dbReference type="EMDB" id="EMD-33329"/>
<dbReference type="EMDB" id="EMD-33330"/>
<dbReference type="EMDB" id="EMD-35370"/>
<dbReference type="EMDB" id="EMD-35371"/>
<dbReference type="EMDB" id="EMD-35375"/>
<dbReference type="EMDB" id="EMD-35413"/>
<dbReference type="EMDB" id="EMD-35414"/>
<dbReference type="EMDB" id="EMD-35596"/>
<dbReference type="EMDB" id="EMD-35597"/>
<dbReference type="EMDB" id="EMD-35599"/>
<dbReference type="EMDB" id="EMD-35639"/>
<dbReference type="EMDB" id="EMD-35649"/>
<dbReference type="EMDB" id="EMD-35651"/>
<dbReference type="EMDB" id="EMD-35672"/>
<dbReference type="EMDB" id="EMD-35673"/>
<dbReference type="EMDB" id="EMD-36178"/>
<dbReference type="EMDB" id="EMD-36179"/>
<dbReference type="EMDB" id="EMD-36180"/>
<dbReference type="EMDB" id="EMD-36181"/>
<dbReference type="EMDB" id="EMD-36838"/>
<dbReference type="EMDB" id="EMD-38629"/>
<dbReference type="EMDB" id="EMD-38630"/>
<dbReference type="EMDB" id="EMD-38631"/>
<dbReference type="EMDB" id="EMD-3883"/>
<dbReference type="EMDB" id="EMD-39455"/>
<dbReference type="EMDB" id="EMD-39456"/>
<dbReference type="EMDB" id="EMD-40205"/>
<dbReference type="EMDB" id="EMD-4070"/>
<dbReference type="EMDB" id="EMD-42351"/>
<dbReference type="EMDB" id="EMD-45170"/>
<dbReference type="EMDB" id="EMD-51132"/>
<dbReference type="EMDB" id="EMD-51452"/>
<dbReference type="EMDB" id="EMD-9701"/>
<dbReference type="EMDB" id="EMD-9702"/>
<dbReference type="EMDB" id="EMD-9703"/>
<dbReference type="SMR" id="P46777"/>
<dbReference type="BioGRID" id="112045">
    <property type="interactions" value="633"/>
</dbReference>
<dbReference type="ComplexPortal" id="CPX-5183">
    <property type="entry name" value="60S cytosolic large ribosomal subunit"/>
</dbReference>
<dbReference type="ComplexPortal" id="CPX-7664">
    <property type="entry name" value="60S cytosolic large ribosomal subunit, testis-specific variant"/>
</dbReference>
<dbReference type="ComplexPortal" id="CPX-7665">
    <property type="entry name" value="60S cytosolic large ribosomal subunit, striated muscle variant"/>
</dbReference>
<dbReference type="CORUM" id="P46777"/>
<dbReference type="DIP" id="DIP-31152N"/>
<dbReference type="FunCoup" id="P46777">
    <property type="interactions" value="2569"/>
</dbReference>
<dbReference type="IntAct" id="P46777">
    <property type="interactions" value="360"/>
</dbReference>
<dbReference type="MINT" id="P46777"/>
<dbReference type="STRING" id="9606.ENSP00000359345"/>
<dbReference type="MoonProt" id="P46777"/>
<dbReference type="GlyGen" id="P46777">
    <property type="glycosylation" value="1 site, 1 O-linked glycan (1 site)"/>
</dbReference>
<dbReference type="iPTMnet" id="P46777"/>
<dbReference type="MetOSite" id="P46777"/>
<dbReference type="PhosphoSitePlus" id="P46777"/>
<dbReference type="SwissPalm" id="P46777"/>
<dbReference type="BioMuta" id="RPL5"/>
<dbReference type="DMDM" id="81175191"/>
<dbReference type="jPOST" id="P46777"/>
<dbReference type="MassIVE" id="P46777"/>
<dbReference type="PaxDb" id="9606-ENSP00000359345"/>
<dbReference type="PeptideAtlas" id="P46777"/>
<dbReference type="ProteomicsDB" id="55759"/>
<dbReference type="Pumba" id="P46777"/>
<dbReference type="TopDownProteomics" id="P46777"/>
<dbReference type="Antibodypedia" id="33652">
    <property type="antibodies" value="317 antibodies from 34 providers"/>
</dbReference>
<dbReference type="DNASU" id="6125"/>
<dbReference type="Ensembl" id="ENST00000370321.8">
    <property type="protein sequence ID" value="ENSP00000359345.2"/>
    <property type="gene ID" value="ENSG00000122406.14"/>
</dbReference>
<dbReference type="GeneID" id="6125"/>
<dbReference type="KEGG" id="hsa:6125"/>
<dbReference type="MANE-Select" id="ENST00000370321.8">
    <property type="protein sequence ID" value="ENSP00000359345.2"/>
    <property type="RefSeq nucleotide sequence ID" value="NM_000969.5"/>
    <property type="RefSeq protein sequence ID" value="NP_000960.2"/>
</dbReference>
<dbReference type="UCSC" id="uc001doz.4">
    <property type="organism name" value="human"/>
</dbReference>
<dbReference type="AGR" id="HGNC:10360"/>
<dbReference type="CTD" id="6125"/>
<dbReference type="DisGeNET" id="6125"/>
<dbReference type="GeneCards" id="RPL5"/>
<dbReference type="GeneReviews" id="RPL5"/>
<dbReference type="HGNC" id="HGNC:10360">
    <property type="gene designation" value="RPL5"/>
</dbReference>
<dbReference type="HPA" id="ENSG00000122406">
    <property type="expression patterns" value="Low tissue specificity"/>
</dbReference>
<dbReference type="MalaCards" id="RPL5"/>
<dbReference type="MIM" id="603634">
    <property type="type" value="gene"/>
</dbReference>
<dbReference type="MIM" id="612561">
    <property type="type" value="phenotype"/>
</dbReference>
<dbReference type="neXtProt" id="NX_P46777"/>
<dbReference type="OpenTargets" id="ENSG00000122406"/>
<dbReference type="Orphanet" id="124">
    <property type="disease" value="Diamond-Blackfan anemia"/>
</dbReference>
<dbReference type="PharmGKB" id="PA34755"/>
<dbReference type="VEuPathDB" id="HostDB:ENSG00000122406"/>
<dbReference type="eggNOG" id="KOG0875">
    <property type="taxonomic scope" value="Eukaryota"/>
</dbReference>
<dbReference type="GeneTree" id="ENSGT00950000183210"/>
<dbReference type="HOGENOM" id="CLU_056222_1_0_1"/>
<dbReference type="InParanoid" id="P46777"/>
<dbReference type="OMA" id="CQIASAH"/>
<dbReference type="OrthoDB" id="9610963at2759"/>
<dbReference type="PAN-GO" id="P46777">
    <property type="GO annotations" value="4 GO annotations based on evolutionary models"/>
</dbReference>
<dbReference type="PhylomeDB" id="P46777"/>
<dbReference type="TreeFam" id="TF300044"/>
<dbReference type="PathwayCommons" id="P46777"/>
<dbReference type="Reactome" id="R-HSA-156827">
    <property type="pathway name" value="L13a-mediated translational silencing of Ceruloplasmin expression"/>
</dbReference>
<dbReference type="Reactome" id="R-HSA-156902">
    <property type="pathway name" value="Peptide chain elongation"/>
</dbReference>
<dbReference type="Reactome" id="R-HSA-1799339">
    <property type="pathway name" value="SRP-dependent cotranslational protein targeting to membrane"/>
</dbReference>
<dbReference type="Reactome" id="R-HSA-192823">
    <property type="pathway name" value="Viral mRNA Translation"/>
</dbReference>
<dbReference type="Reactome" id="R-HSA-2408557">
    <property type="pathway name" value="Selenocysteine synthesis"/>
</dbReference>
<dbReference type="Reactome" id="R-HSA-6791226">
    <property type="pathway name" value="Major pathway of rRNA processing in the nucleolus and cytosol"/>
</dbReference>
<dbReference type="Reactome" id="R-HSA-72689">
    <property type="pathway name" value="Formation of a pool of free 40S subunits"/>
</dbReference>
<dbReference type="Reactome" id="R-HSA-72706">
    <property type="pathway name" value="GTP hydrolysis and joining of the 60S ribosomal subunit"/>
</dbReference>
<dbReference type="Reactome" id="R-HSA-72764">
    <property type="pathway name" value="Eukaryotic Translation Termination"/>
</dbReference>
<dbReference type="Reactome" id="R-HSA-9010553">
    <property type="pathway name" value="Regulation of expression of SLITs and ROBOs"/>
</dbReference>
<dbReference type="Reactome" id="R-HSA-9633012">
    <property type="pathway name" value="Response of EIF2AK4 (GCN2) to amino acid deficiency"/>
</dbReference>
<dbReference type="Reactome" id="R-HSA-975956">
    <property type="pathway name" value="Nonsense Mediated Decay (NMD) independent of the Exon Junction Complex (EJC)"/>
</dbReference>
<dbReference type="Reactome" id="R-HSA-975957">
    <property type="pathway name" value="Nonsense Mediated Decay (NMD) enhanced by the Exon Junction Complex (EJC)"/>
</dbReference>
<dbReference type="SignaLink" id="P46777"/>
<dbReference type="SIGNOR" id="P46777"/>
<dbReference type="BioGRID-ORCS" id="6125">
    <property type="hits" value="819 hits in 1116 CRISPR screens"/>
</dbReference>
<dbReference type="CD-CODE" id="232F8A39">
    <property type="entry name" value="P-body"/>
</dbReference>
<dbReference type="CD-CODE" id="91857CE7">
    <property type="entry name" value="Nucleolus"/>
</dbReference>
<dbReference type="CD-CODE" id="A3AA02E8">
    <property type="entry name" value="Synthetic Condensate 000061"/>
</dbReference>
<dbReference type="CD-CODE" id="DEE660B4">
    <property type="entry name" value="Stress granule"/>
</dbReference>
<dbReference type="ChiTaRS" id="RPL5">
    <property type="organism name" value="human"/>
</dbReference>
<dbReference type="GeneWiki" id="Ribosomal_protein_L5"/>
<dbReference type="GenomeRNAi" id="6125"/>
<dbReference type="Pharos" id="P46777">
    <property type="development level" value="Tbio"/>
</dbReference>
<dbReference type="PRO" id="PR:P46777"/>
<dbReference type="Proteomes" id="UP000005640">
    <property type="component" value="Chromosome 1"/>
</dbReference>
<dbReference type="RNAct" id="P46777">
    <property type="molecule type" value="protein"/>
</dbReference>
<dbReference type="Bgee" id="ENSG00000122406">
    <property type="expression patterns" value="Expressed in germinal epithelium of ovary and 204 other cell types or tissues"/>
</dbReference>
<dbReference type="ExpressionAtlas" id="P46777">
    <property type="expression patterns" value="baseline and differential"/>
</dbReference>
<dbReference type="GO" id="GO:0005737">
    <property type="term" value="C:cytoplasm"/>
    <property type="evidence" value="ECO:0000314"/>
    <property type="project" value="UniProtKB"/>
</dbReference>
<dbReference type="GO" id="GO:0005829">
    <property type="term" value="C:cytosol"/>
    <property type="evidence" value="ECO:0000314"/>
    <property type="project" value="HPA"/>
</dbReference>
<dbReference type="GO" id="GO:0022625">
    <property type="term" value="C:cytosolic large ribosomal subunit"/>
    <property type="evidence" value="ECO:0000314"/>
    <property type="project" value="UniProtKB"/>
</dbReference>
<dbReference type="GO" id="GO:0022626">
    <property type="term" value="C:cytosolic ribosome"/>
    <property type="evidence" value="ECO:0000314"/>
    <property type="project" value="FlyBase"/>
</dbReference>
<dbReference type="GO" id="GO:0005783">
    <property type="term" value="C:endoplasmic reticulum"/>
    <property type="evidence" value="ECO:0000314"/>
    <property type="project" value="HPA"/>
</dbReference>
<dbReference type="GO" id="GO:0070062">
    <property type="term" value="C:extracellular exosome"/>
    <property type="evidence" value="ECO:0007005"/>
    <property type="project" value="UniProtKB"/>
</dbReference>
<dbReference type="GO" id="GO:0005925">
    <property type="term" value="C:focal adhesion"/>
    <property type="evidence" value="ECO:0007005"/>
    <property type="project" value="UniProtKB"/>
</dbReference>
<dbReference type="GO" id="GO:0016020">
    <property type="term" value="C:membrane"/>
    <property type="evidence" value="ECO:0007005"/>
    <property type="project" value="UniProtKB"/>
</dbReference>
<dbReference type="GO" id="GO:0005730">
    <property type="term" value="C:nucleolus"/>
    <property type="evidence" value="ECO:0000314"/>
    <property type="project" value="UniProtKB"/>
</dbReference>
<dbReference type="GO" id="GO:0005654">
    <property type="term" value="C:nucleoplasm"/>
    <property type="evidence" value="ECO:0000314"/>
    <property type="project" value="UniProtKB"/>
</dbReference>
<dbReference type="GO" id="GO:0005634">
    <property type="term" value="C:nucleus"/>
    <property type="evidence" value="ECO:0000314"/>
    <property type="project" value="UniProtKB"/>
</dbReference>
<dbReference type="GO" id="GO:0032991">
    <property type="term" value="C:protein-containing complex"/>
    <property type="evidence" value="ECO:0000314"/>
    <property type="project" value="CAFA"/>
</dbReference>
<dbReference type="GO" id="GO:1990904">
    <property type="term" value="C:ribonucleoprotein complex"/>
    <property type="evidence" value="ECO:0000314"/>
    <property type="project" value="MGI"/>
</dbReference>
<dbReference type="GO" id="GO:0008097">
    <property type="term" value="F:5S rRNA binding"/>
    <property type="evidence" value="ECO:0000314"/>
    <property type="project" value="CAFA"/>
</dbReference>
<dbReference type="GO" id="GO:0003730">
    <property type="term" value="F:mRNA 3'-UTR binding"/>
    <property type="evidence" value="ECO:0000314"/>
    <property type="project" value="CAFA"/>
</dbReference>
<dbReference type="GO" id="GO:0048027">
    <property type="term" value="F:mRNA 5'-UTR binding"/>
    <property type="evidence" value="ECO:0000314"/>
    <property type="project" value="CAFA"/>
</dbReference>
<dbReference type="GO" id="GO:0003723">
    <property type="term" value="F:RNA binding"/>
    <property type="evidence" value="ECO:0007005"/>
    <property type="project" value="UniProtKB"/>
</dbReference>
<dbReference type="GO" id="GO:0003735">
    <property type="term" value="F:structural constituent of ribosome"/>
    <property type="evidence" value="ECO:0000314"/>
    <property type="project" value="UniProtKB"/>
</dbReference>
<dbReference type="GO" id="GO:1990948">
    <property type="term" value="F:ubiquitin ligase inhibitor activity"/>
    <property type="evidence" value="ECO:0000314"/>
    <property type="project" value="CAFA"/>
</dbReference>
<dbReference type="GO" id="GO:0031625">
    <property type="term" value="F:ubiquitin protein ligase binding"/>
    <property type="evidence" value="ECO:0000353"/>
    <property type="project" value="CAFA"/>
</dbReference>
<dbReference type="GO" id="GO:0002181">
    <property type="term" value="P:cytoplasmic translation"/>
    <property type="evidence" value="ECO:0000303"/>
    <property type="project" value="ComplexPortal"/>
</dbReference>
<dbReference type="GO" id="GO:2000435">
    <property type="term" value="P:negative regulation of protein neddylation"/>
    <property type="evidence" value="ECO:0000314"/>
    <property type="project" value="CAFA"/>
</dbReference>
<dbReference type="GO" id="GO:1904667">
    <property type="term" value="P:negative regulation of ubiquitin protein ligase activity"/>
    <property type="evidence" value="ECO:0000314"/>
    <property type="project" value="CAFA"/>
</dbReference>
<dbReference type="GO" id="GO:2000059">
    <property type="term" value="P:negative regulation of ubiquitin-dependent protein catabolic process"/>
    <property type="evidence" value="ECO:0000314"/>
    <property type="project" value="CAFA"/>
</dbReference>
<dbReference type="GO" id="GO:0010628">
    <property type="term" value="P:positive regulation of gene expression"/>
    <property type="evidence" value="ECO:0000314"/>
    <property type="project" value="CAFA"/>
</dbReference>
<dbReference type="GO" id="GO:0045727">
    <property type="term" value="P:positive regulation of translation"/>
    <property type="evidence" value="ECO:0000314"/>
    <property type="project" value="CAFA"/>
</dbReference>
<dbReference type="GO" id="GO:0050821">
    <property type="term" value="P:protein stabilization"/>
    <property type="evidence" value="ECO:0000315"/>
    <property type="project" value="CAFA"/>
</dbReference>
<dbReference type="GO" id="GO:1901796">
    <property type="term" value="P:regulation of signal transduction by p53 class mediator"/>
    <property type="evidence" value="ECO:0000315"/>
    <property type="project" value="UniProtKB"/>
</dbReference>
<dbReference type="GO" id="GO:0000027">
    <property type="term" value="P:ribosomal large subunit assembly"/>
    <property type="evidence" value="ECO:0000315"/>
    <property type="project" value="UniProtKB"/>
</dbReference>
<dbReference type="GO" id="GO:0042273">
    <property type="term" value="P:ribosomal large subunit biogenesis"/>
    <property type="evidence" value="ECO:0000315"/>
    <property type="project" value="UniProtKB"/>
</dbReference>
<dbReference type="GO" id="GO:0006364">
    <property type="term" value="P:rRNA processing"/>
    <property type="evidence" value="ECO:0000315"/>
    <property type="project" value="UniProtKB"/>
</dbReference>
<dbReference type="GO" id="GO:0006412">
    <property type="term" value="P:translation"/>
    <property type="evidence" value="ECO:0000304"/>
    <property type="project" value="ProtInc"/>
</dbReference>
<dbReference type="CDD" id="cd00432">
    <property type="entry name" value="Ribosomal_L18_L5e"/>
    <property type="match status" value="1"/>
</dbReference>
<dbReference type="FunFam" id="3.30.420.100:FF:000011">
    <property type="entry name" value="60S ribosomal protein L5"/>
    <property type="match status" value="1"/>
</dbReference>
<dbReference type="FunFam" id="3.30.420.100:FF:000013">
    <property type="entry name" value="60S ribosomal protein L5 isoform X2"/>
    <property type="match status" value="1"/>
</dbReference>
<dbReference type="Gene3D" id="3.30.420.100">
    <property type="match status" value="1"/>
</dbReference>
<dbReference type="HAMAP" id="MF_01337_A">
    <property type="entry name" value="Ribosomal_uL18_A"/>
    <property type="match status" value="1"/>
</dbReference>
<dbReference type="InterPro" id="IPR005485">
    <property type="entry name" value="Rbsml_uL18_euk"/>
</dbReference>
<dbReference type="InterPro" id="IPR025607">
    <property type="entry name" value="Ribosomal_uL18_C_euk"/>
</dbReference>
<dbReference type="PANTHER" id="PTHR23410:SF12">
    <property type="entry name" value="LARGE RIBOSOMAL SUBUNIT PROTEIN UL18"/>
    <property type="match status" value="1"/>
</dbReference>
<dbReference type="PANTHER" id="PTHR23410">
    <property type="entry name" value="RIBOSOMAL PROTEIN L5-RELATED"/>
    <property type="match status" value="1"/>
</dbReference>
<dbReference type="Pfam" id="PF14204">
    <property type="entry name" value="Ribosomal_L18_c"/>
    <property type="match status" value="1"/>
</dbReference>
<dbReference type="Pfam" id="PF17144">
    <property type="entry name" value="Ribosomal_L5e"/>
    <property type="match status" value="1"/>
</dbReference>
<dbReference type="PRINTS" id="PR00058">
    <property type="entry name" value="RIBOSOMALL5"/>
</dbReference>
<dbReference type="SUPFAM" id="SSF53137">
    <property type="entry name" value="Translational machinery components"/>
    <property type="match status" value="1"/>
</dbReference>
<gene>
    <name type="primary">RPL5</name>
    <name type="ORF">MSTP030</name>
</gene>
<evidence type="ECO:0000250" key="1">
    <source>
        <dbReference type="UniProtKB" id="P47962"/>
    </source>
</evidence>
<evidence type="ECO:0000256" key="2">
    <source>
        <dbReference type="SAM" id="MobiDB-lite"/>
    </source>
</evidence>
<evidence type="ECO:0000269" key="3">
    <source>
    </source>
</evidence>
<evidence type="ECO:0000269" key="4">
    <source>
    </source>
</evidence>
<evidence type="ECO:0000269" key="5">
    <source>
    </source>
</evidence>
<evidence type="ECO:0000269" key="6">
    <source>
    </source>
</evidence>
<evidence type="ECO:0000269" key="7">
    <source>
    </source>
</evidence>
<evidence type="ECO:0000269" key="8">
    <source>
    </source>
</evidence>
<evidence type="ECO:0000269" key="9">
    <source>
    </source>
</evidence>
<evidence type="ECO:0000269" key="10">
    <source>
    </source>
</evidence>
<evidence type="ECO:0000269" key="11">
    <source>
    </source>
</evidence>
<evidence type="ECO:0000269" key="12">
    <source>
    </source>
</evidence>
<evidence type="ECO:0000269" key="13">
    <source ref="7"/>
</evidence>
<evidence type="ECO:0000303" key="14">
    <source>
    </source>
</evidence>
<evidence type="ECO:0000305" key="15"/>
<evidence type="ECO:0007744" key="16">
    <source>
        <dbReference type="PDB" id="4V6X"/>
    </source>
</evidence>
<evidence type="ECO:0007744" key="17">
    <source>
        <dbReference type="PDB" id="6LQM"/>
    </source>
</evidence>
<evidence type="ECO:0007744" key="18">
    <source>
        <dbReference type="PDB" id="6LSR"/>
    </source>
</evidence>
<evidence type="ECO:0007744" key="19">
    <source>
        <dbReference type="PDB" id="6LSS"/>
    </source>
</evidence>
<evidence type="ECO:0007744" key="20">
    <source>
        <dbReference type="PDB" id="6LU8"/>
    </source>
</evidence>
<evidence type="ECO:0007744" key="21">
    <source>
        <dbReference type="PDB" id="8BGU"/>
    </source>
</evidence>
<evidence type="ECO:0007744" key="22">
    <source>
    </source>
</evidence>
<evidence type="ECO:0007744" key="23">
    <source>
    </source>
</evidence>
<evidence type="ECO:0007744" key="24">
    <source>
    </source>
</evidence>
<evidence type="ECO:0007744" key="25">
    <source>
    </source>
</evidence>
<evidence type="ECO:0007744" key="26">
    <source>
    </source>
</evidence>
<organism>
    <name type="scientific">Homo sapiens</name>
    <name type="common">Human</name>
    <dbReference type="NCBI Taxonomy" id="9606"/>
    <lineage>
        <taxon>Eukaryota</taxon>
        <taxon>Metazoa</taxon>
        <taxon>Chordata</taxon>
        <taxon>Craniata</taxon>
        <taxon>Vertebrata</taxon>
        <taxon>Euteleostomi</taxon>
        <taxon>Mammalia</taxon>
        <taxon>Eutheria</taxon>
        <taxon>Euarchontoglires</taxon>
        <taxon>Primates</taxon>
        <taxon>Haplorrhini</taxon>
        <taxon>Catarrhini</taxon>
        <taxon>Hominidae</taxon>
        <taxon>Homo</taxon>
    </lineage>
</organism>
<reference key="1">
    <citation type="journal article" date="1995" name="Biochim. Biophys. Acta">
        <title>Cloning, sequencing and expression of the L5, L21, L27a, L28, S5, S9, S10 and S29 human ribosomal protein mRNAs.</title>
        <authorList>
            <person name="Frigerio J.-M."/>
            <person name="Dagorn J.-C."/>
            <person name="Iovanna J.L."/>
        </authorList>
    </citation>
    <scope>NUCLEOTIDE SEQUENCE [MRNA]</scope>
    <source>
        <tissue>Colon</tissue>
    </source>
</reference>
<reference key="2">
    <citation type="submission" date="1998-12" db="EMBL/GenBank/DDBJ databases">
        <authorList>
            <person name="Liu B."/>
            <person name="Liu Y.Q."/>
            <person name="Wang X.Y."/>
            <person name="Zhao B."/>
            <person name="Sheng H."/>
            <person name="Zhao X.W."/>
            <person name="Liu S."/>
            <person name="Xu Y.Y."/>
            <person name="Ye J."/>
            <person name="Song L."/>
            <person name="Gao Y."/>
            <person name="Zhang C.L."/>
            <person name="Zhang J."/>
            <person name="Wei Y.J."/>
            <person name="Cao H.Q."/>
            <person name="Zhao Y."/>
            <person name="Liu L.S."/>
            <person name="Ding J.F."/>
            <person name="Gao R.L."/>
            <person name="Wu Q.Y."/>
            <person name="Qiang B.Q."/>
            <person name="Yuan J.G."/>
            <person name="Liew C.C."/>
            <person name="Zhao M.S."/>
            <person name="Hui R.T."/>
        </authorList>
    </citation>
    <scope>NUCLEOTIDE SEQUENCE [LARGE SCALE MRNA]</scope>
    <source>
        <tissue>Aorta</tissue>
    </source>
</reference>
<reference key="3">
    <citation type="submission" date="2005-04" db="EMBL/GenBank/DDBJ databases">
        <authorList>
            <person name="Suzuki Y."/>
            <person name="Sugano S."/>
            <person name="Totoki Y."/>
            <person name="Toyoda A."/>
            <person name="Takeda T."/>
            <person name="Sakaki Y."/>
            <person name="Tanaka A."/>
            <person name="Yokoyama S."/>
        </authorList>
    </citation>
    <scope>NUCLEOTIDE SEQUENCE [LARGE SCALE MRNA]</scope>
    <source>
        <tissue>Coronary arterial endothelium</tissue>
    </source>
</reference>
<reference key="4">
    <citation type="journal article" date="2006" name="Nature">
        <title>The DNA sequence and biological annotation of human chromosome 1.</title>
        <authorList>
            <person name="Gregory S.G."/>
            <person name="Barlow K.F."/>
            <person name="McLay K.E."/>
            <person name="Kaul R."/>
            <person name="Swarbreck D."/>
            <person name="Dunham A."/>
            <person name="Scott C.E."/>
            <person name="Howe K.L."/>
            <person name="Woodfine K."/>
            <person name="Spencer C.C.A."/>
            <person name="Jones M.C."/>
            <person name="Gillson C."/>
            <person name="Searle S."/>
            <person name="Zhou Y."/>
            <person name="Kokocinski F."/>
            <person name="McDonald L."/>
            <person name="Evans R."/>
            <person name="Phillips K."/>
            <person name="Atkinson A."/>
            <person name="Cooper R."/>
            <person name="Jones C."/>
            <person name="Hall R.E."/>
            <person name="Andrews T.D."/>
            <person name="Lloyd C."/>
            <person name="Ainscough R."/>
            <person name="Almeida J.P."/>
            <person name="Ambrose K.D."/>
            <person name="Anderson F."/>
            <person name="Andrew R.W."/>
            <person name="Ashwell R.I.S."/>
            <person name="Aubin K."/>
            <person name="Babbage A.K."/>
            <person name="Bagguley C.L."/>
            <person name="Bailey J."/>
            <person name="Beasley H."/>
            <person name="Bethel G."/>
            <person name="Bird C.P."/>
            <person name="Bray-Allen S."/>
            <person name="Brown J.Y."/>
            <person name="Brown A.J."/>
            <person name="Buckley D."/>
            <person name="Burton J."/>
            <person name="Bye J."/>
            <person name="Carder C."/>
            <person name="Chapman J.C."/>
            <person name="Clark S.Y."/>
            <person name="Clarke G."/>
            <person name="Clee C."/>
            <person name="Cobley V."/>
            <person name="Collier R.E."/>
            <person name="Corby N."/>
            <person name="Coville G.J."/>
            <person name="Davies J."/>
            <person name="Deadman R."/>
            <person name="Dunn M."/>
            <person name="Earthrowl M."/>
            <person name="Ellington A.G."/>
            <person name="Errington H."/>
            <person name="Frankish A."/>
            <person name="Frankland J."/>
            <person name="French L."/>
            <person name="Garner P."/>
            <person name="Garnett J."/>
            <person name="Gay L."/>
            <person name="Ghori M.R.J."/>
            <person name="Gibson R."/>
            <person name="Gilby L.M."/>
            <person name="Gillett W."/>
            <person name="Glithero R.J."/>
            <person name="Grafham D.V."/>
            <person name="Griffiths C."/>
            <person name="Griffiths-Jones S."/>
            <person name="Grocock R."/>
            <person name="Hammond S."/>
            <person name="Harrison E.S.I."/>
            <person name="Hart E."/>
            <person name="Haugen E."/>
            <person name="Heath P.D."/>
            <person name="Holmes S."/>
            <person name="Holt K."/>
            <person name="Howden P.J."/>
            <person name="Hunt A.R."/>
            <person name="Hunt S.E."/>
            <person name="Hunter G."/>
            <person name="Isherwood J."/>
            <person name="James R."/>
            <person name="Johnson C."/>
            <person name="Johnson D."/>
            <person name="Joy A."/>
            <person name="Kay M."/>
            <person name="Kershaw J.K."/>
            <person name="Kibukawa M."/>
            <person name="Kimberley A.M."/>
            <person name="King A."/>
            <person name="Knights A.J."/>
            <person name="Lad H."/>
            <person name="Laird G."/>
            <person name="Lawlor S."/>
            <person name="Leongamornlert D.A."/>
            <person name="Lloyd D.M."/>
            <person name="Loveland J."/>
            <person name="Lovell J."/>
            <person name="Lush M.J."/>
            <person name="Lyne R."/>
            <person name="Martin S."/>
            <person name="Mashreghi-Mohammadi M."/>
            <person name="Matthews L."/>
            <person name="Matthews N.S.W."/>
            <person name="McLaren S."/>
            <person name="Milne S."/>
            <person name="Mistry S."/>
            <person name="Moore M.J.F."/>
            <person name="Nickerson T."/>
            <person name="O'Dell C.N."/>
            <person name="Oliver K."/>
            <person name="Palmeiri A."/>
            <person name="Palmer S.A."/>
            <person name="Parker A."/>
            <person name="Patel D."/>
            <person name="Pearce A.V."/>
            <person name="Peck A.I."/>
            <person name="Pelan S."/>
            <person name="Phelps K."/>
            <person name="Phillimore B.J."/>
            <person name="Plumb R."/>
            <person name="Rajan J."/>
            <person name="Raymond C."/>
            <person name="Rouse G."/>
            <person name="Saenphimmachak C."/>
            <person name="Sehra H.K."/>
            <person name="Sheridan E."/>
            <person name="Shownkeen R."/>
            <person name="Sims S."/>
            <person name="Skuce C.D."/>
            <person name="Smith M."/>
            <person name="Steward C."/>
            <person name="Subramanian S."/>
            <person name="Sycamore N."/>
            <person name="Tracey A."/>
            <person name="Tromans A."/>
            <person name="Van Helmond Z."/>
            <person name="Wall M."/>
            <person name="Wallis J.M."/>
            <person name="White S."/>
            <person name="Whitehead S.L."/>
            <person name="Wilkinson J.E."/>
            <person name="Willey D.L."/>
            <person name="Williams H."/>
            <person name="Wilming L."/>
            <person name="Wray P.W."/>
            <person name="Wu Z."/>
            <person name="Coulson A."/>
            <person name="Vaudin M."/>
            <person name="Sulston J.E."/>
            <person name="Durbin R.M."/>
            <person name="Hubbard T."/>
            <person name="Wooster R."/>
            <person name="Dunham I."/>
            <person name="Carter N.P."/>
            <person name="McVean G."/>
            <person name="Ross M.T."/>
            <person name="Harrow J."/>
            <person name="Olson M.V."/>
            <person name="Beck S."/>
            <person name="Rogers J."/>
            <person name="Bentley D.R."/>
        </authorList>
    </citation>
    <scope>NUCLEOTIDE SEQUENCE [LARGE SCALE GENOMIC DNA]</scope>
</reference>
<reference key="5">
    <citation type="journal article" date="2004" name="Genome Res.">
        <title>The status, quality, and expansion of the NIH full-length cDNA project: the Mammalian Gene Collection (MGC).</title>
        <authorList>
            <consortium name="The MGC Project Team"/>
        </authorList>
    </citation>
    <scope>NUCLEOTIDE SEQUENCE [LARGE SCALE MRNA]</scope>
    <scope>VARIANT CYS-210</scope>
    <source>
        <tissue>Lung</tissue>
    </source>
</reference>
<reference key="6">
    <citation type="journal article" date="2003" name="J. Protein Chem.">
        <title>Characterization and analysis of posttranslational modifications of the human large cytoplasmic ribosomal subunit proteins by mass spectrometry and Edman sequencing.</title>
        <authorList>
            <person name="Odintsova T.I."/>
            <person name="Muller E.C."/>
            <person name="Ivanov A.V."/>
            <person name="Egorov T.A."/>
            <person name="Bienert R."/>
            <person name="Vladimirov S.N."/>
            <person name="Kostka S."/>
            <person name="Otto A."/>
            <person name="Wittmann-Liebold B."/>
            <person name="Karpova G.G."/>
        </authorList>
    </citation>
    <scope>PROTEIN SEQUENCE OF 2-12</scope>
    <scope>IDENTIFICATION BY MASS SPECTROMETRY</scope>
    <scope>FUNCTION</scope>
</reference>
<reference key="7">
    <citation type="submission" date="2005-08" db="UniProtKB">
        <authorList>
            <person name="Bienvenut W.V."/>
        </authorList>
    </citation>
    <scope>PROTEIN SEQUENCE OF 69-85; 159-188 AND 222-228</scope>
    <scope>SUBCELLULAR LOCATION</scope>
    <scope>IDENTIFICATION BY MASS SPECTROMETRY</scope>
    <source>
        <tissue>Cervix carcinoma</tissue>
    </source>
</reference>
<reference key="8">
    <citation type="journal article" date="1996" name="Biochem. Biophys. Res. Commun.">
        <title>Interaction of the beta subunit of casein kinase II with the ribosomal protein L5.</title>
        <authorList>
            <person name="Kim J.-M."/>
            <person name="Cha J.-Y."/>
            <person name="Marshak D.R."/>
            <person name="Bae Y.-S."/>
        </authorList>
    </citation>
    <scope>NUCLEOTIDE SEQUENCE [MRNA] OF 153-297</scope>
</reference>
<reference key="9">
    <citation type="journal article" date="1994" name="Nucleic Acids Res.">
        <title>U21, a novel small nucleolar RNA with a 13 nt. complementarity to 28S rRNA, is encoded in an intron of ribosomal protein L5 gene in chicken and mammals.</title>
        <authorList>
            <person name="Qu L.H."/>
            <person name="Nicoloso M."/>
            <person name="Michot B."/>
            <person name="Azum M.C."/>
            <person name="Caizergues-Ferrer M."/>
            <person name="Renalier M.H."/>
            <person name="Bachellerie J.-P."/>
        </authorList>
    </citation>
    <scope>NUCLEOTIDE SEQUENCE [GENOMIC DNA] OF 162-176</scope>
</reference>
<reference key="10">
    <citation type="journal article" date="1998" name="EMBO J.">
        <title>Importin beta, transportin, RanBP5 and RanBP7 mediate nuclear import of ribosomal proteins in mammalian cells.</title>
        <authorList>
            <person name="Jaekel S."/>
            <person name="Goerlich D."/>
        </authorList>
    </citation>
    <scope>INTERACTION WITH IPO5; IPO7 AND KPNB1</scope>
    <scope>SUBCELLULAR LOCATION</scope>
</reference>
<reference key="11">
    <citation type="journal article" date="2003" name="Nature">
        <title>Proteomic characterization of the human centrosome by protein correlation profiling.</title>
        <authorList>
            <person name="Andersen J.S."/>
            <person name="Wilkinson C.J."/>
            <person name="Mayor T."/>
            <person name="Mortensen P."/>
            <person name="Nigg E.A."/>
            <person name="Mann M."/>
        </authorList>
    </citation>
    <scope>IDENTIFICATION BY MASS SPECTROMETRY</scope>
    <source>
        <tissue>Lymphoblast</tissue>
    </source>
</reference>
<reference key="12">
    <citation type="journal article" date="2004" name="Mol. Biol. Cell">
        <title>NVL2 is a nucleolar AAA-ATPase that interacts with ribosomal protein L5 through its nucleolar localization sequence.</title>
        <authorList>
            <person name="Nagahama M."/>
            <person name="Hara Y."/>
            <person name="Seki A."/>
            <person name="Yamazoe T."/>
            <person name="Kawate Y."/>
            <person name="Shinohara T."/>
            <person name="Hatsuzawa K."/>
            <person name="Tani K."/>
            <person name="Tagaya M."/>
        </authorList>
    </citation>
    <scope>SUBCELLULAR LOCATION</scope>
    <scope>INTERACTION WITH NVL</scope>
</reference>
<reference key="13">
    <citation type="journal article" date="2008" name="Am. J. Hum. Genet.">
        <title>Ribosomal protein L5 and L11 mutations are associated with cleft palate and abnormal thumbs in Diamond-Blackfan anemia patients.</title>
        <authorList>
            <person name="Gazda H.T."/>
            <person name="Sheen M.R."/>
            <person name="Vlachos A."/>
            <person name="Choesmel V."/>
            <person name="O'Donohue M.-F."/>
            <person name="Schneider H."/>
            <person name="Darras N."/>
            <person name="Hasman C."/>
            <person name="Sieff C.A."/>
            <person name="Newburger P.E."/>
            <person name="Ball S.E."/>
            <person name="Niewiadomska E."/>
            <person name="Matysiak M."/>
            <person name="Zaucha J.M."/>
            <person name="Glader B."/>
            <person name="Niemeyer C."/>
            <person name="Meerpohl J.J."/>
            <person name="Atsidaftos E."/>
            <person name="Lipton J.M."/>
            <person name="Gleizes P.-E."/>
            <person name="Beggs A.H."/>
        </authorList>
    </citation>
    <scope>FUNCTION</scope>
    <scope>VARIANT DBA6 SER-140</scope>
</reference>
<reference key="14">
    <citation type="journal article" date="2009" name="Science">
        <title>Lysine acetylation targets protein complexes and co-regulates major cellular functions.</title>
        <authorList>
            <person name="Choudhary C."/>
            <person name="Kumar C."/>
            <person name="Gnad F."/>
            <person name="Nielsen M.L."/>
            <person name="Rehman M."/>
            <person name="Walther T.C."/>
            <person name="Olsen J.V."/>
            <person name="Mann M."/>
        </authorList>
    </citation>
    <scope>ACETYLATION [LARGE SCALE ANALYSIS] AT LYS-5 AND LYS-48</scope>
    <scope>IDENTIFICATION BY MASS SPECTROMETRY [LARGE SCALE ANALYSIS]</scope>
</reference>
<reference key="15">
    <citation type="journal article" date="2010" name="Mol. Biol. Cell">
        <title>RRP1B targets PP1 to mammalian cell nucleoli and is associated with pre-60S ribosomal subunits.</title>
        <authorList>
            <person name="Chamousset D."/>
            <person name="De Wever V."/>
            <person name="Moorhead G.B."/>
            <person name="Chen Y."/>
            <person name="Boisvert F.M."/>
            <person name="Lamond A.I."/>
            <person name="Trinkle-Mulcahy L."/>
        </authorList>
    </citation>
    <scope>INTERACTION WITH RRP1B</scope>
</reference>
<reference key="16">
    <citation type="journal article" date="2011" name="BMC Syst. Biol.">
        <title>Initial characterization of the human central proteome.</title>
        <authorList>
            <person name="Burkard T.R."/>
            <person name="Planyavsky M."/>
            <person name="Kaupe I."/>
            <person name="Breitwieser F.P."/>
            <person name="Buerckstuemmer T."/>
            <person name="Bennett K.L."/>
            <person name="Superti-Furga G."/>
            <person name="Colinge J."/>
        </authorList>
    </citation>
    <scope>IDENTIFICATION BY MASS SPECTROMETRY [LARGE SCALE ANALYSIS]</scope>
</reference>
<reference key="17">
    <citation type="journal article" date="2011" name="Sci. Signal.">
        <title>System-wide temporal characterization of the proteome and phosphoproteome of human embryonic stem cell differentiation.</title>
        <authorList>
            <person name="Rigbolt K.T."/>
            <person name="Prokhorova T.A."/>
            <person name="Akimov V."/>
            <person name="Henningsen J."/>
            <person name="Johansen P.T."/>
            <person name="Kratchmarova I."/>
            <person name="Kassem M."/>
            <person name="Mann M."/>
            <person name="Olsen J.V."/>
            <person name="Blagoev B."/>
        </authorList>
    </citation>
    <scope>PHOSPHORYLATION [LARGE SCALE ANALYSIS] AT SER-272</scope>
    <scope>IDENTIFICATION BY MASS SPECTROMETRY [LARGE SCALE ANALYSIS]</scope>
</reference>
<reference key="18">
    <citation type="journal article" date="2012" name="Proc. Natl. Acad. Sci. U.S.A.">
        <title>N-terminal acetylome analyses and functional insights of the N-terminal acetyltransferase NatB.</title>
        <authorList>
            <person name="Van Damme P."/>
            <person name="Lasa M."/>
            <person name="Polevoda B."/>
            <person name="Gazquez C."/>
            <person name="Elosegui-Artola A."/>
            <person name="Kim D.S."/>
            <person name="De Juan-Pardo E."/>
            <person name="Demeyer K."/>
            <person name="Hole K."/>
            <person name="Larrea E."/>
            <person name="Timmerman E."/>
            <person name="Prieto J."/>
            <person name="Arnesen T."/>
            <person name="Sherman F."/>
            <person name="Gevaert K."/>
            <person name="Aldabe R."/>
        </authorList>
    </citation>
    <scope>ACETYLATION [LARGE SCALE ANALYSIS] AT GLY-2</scope>
    <scope>CLEAVAGE OF INITIATOR METHIONINE [LARGE SCALE ANALYSIS]</scope>
    <scope>IDENTIFICATION BY MASS SPECTROMETRY [LARGE SCALE ANALYSIS]</scope>
</reference>
<reference key="19">
    <citation type="journal article" date="2013" name="Cell Rep.">
        <title>The 5S RNP couples p53 homeostasis to ribosome biogenesis and nucleolar stress.</title>
        <authorList>
            <person name="Sloan K.E."/>
            <person name="Bohnsack M.T."/>
            <person name="Watkins N.J."/>
        </authorList>
    </citation>
    <scope>FUNCTION</scope>
    <scope>SUBUNIT</scope>
</reference>
<reference key="20">
    <citation type="journal article" date="2013" name="J. Proteome Res.">
        <title>Toward a comprehensive characterization of a human cancer cell phosphoproteome.</title>
        <authorList>
            <person name="Zhou H."/>
            <person name="Di Palma S."/>
            <person name="Preisinger C."/>
            <person name="Peng M."/>
            <person name="Polat A.N."/>
            <person name="Heck A.J."/>
            <person name="Mohammed S."/>
        </authorList>
    </citation>
    <scope>PHOSPHORYLATION [LARGE SCALE ANALYSIS] AT SER-185 AND THR-232</scope>
    <scope>IDENTIFICATION BY MASS SPECTROMETRY [LARGE SCALE ANALYSIS]</scope>
    <source>
        <tissue>Cervix carcinoma</tissue>
        <tissue>Erythroleukemia</tissue>
    </source>
</reference>
<reference key="21">
    <citation type="journal article" date="2014" name="Curr. Opin. Struct. Biol.">
        <title>A new system for naming ribosomal proteins.</title>
        <authorList>
            <person name="Ban N."/>
            <person name="Beckmann R."/>
            <person name="Cate J.H.D."/>
            <person name="Dinman J.D."/>
            <person name="Dragon F."/>
            <person name="Ellis S.R."/>
            <person name="Lafontaine D.L.J."/>
            <person name="Lindahl L."/>
            <person name="Liljas A."/>
            <person name="Lipton J.M."/>
            <person name="McAlear M.A."/>
            <person name="Moore P.B."/>
            <person name="Noller H.F."/>
            <person name="Ortega J."/>
            <person name="Panse V.G."/>
            <person name="Ramakrishnan V."/>
            <person name="Spahn C.M.T."/>
            <person name="Steitz T.A."/>
            <person name="Tchorzewski M."/>
            <person name="Tollervey D."/>
            <person name="Warren A.J."/>
            <person name="Williamson J.R."/>
            <person name="Wilson D."/>
            <person name="Yonath A."/>
            <person name="Yusupov M."/>
        </authorList>
    </citation>
    <scope>NOMENCLATURE</scope>
</reference>
<reference key="22">
    <citation type="journal article" date="2014" name="J. Proteomics">
        <title>An enzyme assisted RP-RPLC approach for in-depth analysis of human liver phosphoproteome.</title>
        <authorList>
            <person name="Bian Y."/>
            <person name="Song C."/>
            <person name="Cheng K."/>
            <person name="Dong M."/>
            <person name="Wang F."/>
            <person name="Huang J."/>
            <person name="Sun D."/>
            <person name="Wang L."/>
            <person name="Ye M."/>
            <person name="Zou H."/>
        </authorList>
    </citation>
    <scope>IDENTIFICATION BY MASS SPECTROMETRY [LARGE SCALE ANALYSIS]</scope>
    <source>
        <tissue>Liver</tissue>
    </source>
</reference>
<reference key="23">
    <citation type="journal article" date="2014" name="Mol. Cell. Proteomics">
        <title>Immunoaffinity enrichment and mass spectrometry analysis of protein methylation.</title>
        <authorList>
            <person name="Guo A."/>
            <person name="Gu H."/>
            <person name="Zhou J."/>
            <person name="Mulhern D."/>
            <person name="Wang Y."/>
            <person name="Lee K.A."/>
            <person name="Yang V."/>
            <person name="Aguiar M."/>
            <person name="Kornhauser J."/>
            <person name="Jia X."/>
            <person name="Ren J."/>
            <person name="Beausoleil S.A."/>
            <person name="Silva J.C."/>
            <person name="Vemulapalli V."/>
            <person name="Bedford M.T."/>
            <person name="Comb M.J."/>
        </authorList>
    </citation>
    <scope>IDENTIFICATION BY MASS SPECTROMETRY [LARGE SCALE ANALYSIS]</scope>
    <source>
        <tissue>Colon carcinoma</tissue>
    </source>
</reference>
<reference key="24">
    <citation type="journal article" date="2014" name="Proc. Natl. Acad. Sci. U.S.A.">
        <title>Mapping of SUMO sites and analysis of SUMOylation changes induced by external stimuli.</title>
        <authorList>
            <person name="Impens F."/>
            <person name="Radoshevich L."/>
            <person name="Cossart P."/>
            <person name="Ribet D."/>
        </authorList>
    </citation>
    <scope>SUMOYLATION [LARGE SCALE ANALYSIS] AT LYS-220</scope>
    <scope>IDENTIFICATION BY MASS SPECTROMETRY [LARGE SCALE ANALYSIS]</scope>
</reference>
<reference key="25">
    <citation type="journal article" date="2015" name="Proteomics">
        <title>N-terminome analysis of the human mitochondrial proteome.</title>
        <authorList>
            <person name="Vaca Jacome A.S."/>
            <person name="Rabilloud T."/>
            <person name="Schaeffer-Reiss C."/>
            <person name="Rompais M."/>
            <person name="Ayoub D."/>
            <person name="Lane L."/>
            <person name="Bairoch A."/>
            <person name="Van Dorsselaer A."/>
            <person name="Carapito C."/>
        </authorList>
    </citation>
    <scope>IDENTIFICATION BY MASS SPECTROMETRY [LARGE SCALE ANALYSIS]</scope>
</reference>
<reference evidence="16" key="26">
    <citation type="journal article" date="2013" name="Nature">
        <title>Structures of the human and Drosophila 80S ribosome.</title>
        <authorList>
            <person name="Anger A.M."/>
            <person name="Armache J.P."/>
            <person name="Berninghausen O."/>
            <person name="Habeck M."/>
            <person name="Subklewe M."/>
            <person name="Wilson D.N."/>
            <person name="Beckmann R."/>
        </authorList>
    </citation>
    <scope>STRUCTURE BY ELECTRON MICROSCOPY (5.0 ANGSTROMS) OF 80S RIBOSOME</scope>
    <scope>FUNCTION</scope>
    <scope>SUBUNIT</scope>
    <scope>SUBCELLULAR LOCATION</scope>
</reference>
<reference evidence="17 18 19 20" key="27">
    <citation type="journal article" date="2020" name="Nat. Commun.">
        <title>Structural snapshots of human pre-60S ribosomal particles before and after nuclear export.</title>
        <authorList>
            <person name="Liang X."/>
            <person name="Zuo M.Q."/>
            <person name="Zhang Y."/>
            <person name="Li N."/>
            <person name="Ma C."/>
            <person name="Dong M.Q."/>
            <person name="Gao N."/>
        </authorList>
    </citation>
    <scope>STRUCTURE BY ELECTRON MICROSCOPY (3.09 ANGSTROMS)</scope>
    <scope>FUNCTION</scope>
    <scope>SUBUNIT</scope>
</reference>
<reference evidence="21" key="28">
    <citation type="journal article" date="2023" name="Nat. Struct. Mol. Biol.">
        <title>Structure of nascent 5S RNPs at the crossroad between ribosome assembly and MDM2-p53 pathways.</title>
        <authorList>
            <person name="Castillo Duque de Estrada N.M."/>
            <person name="Thoms M."/>
            <person name="Flemming D."/>
            <person name="Hammaren H.M."/>
            <person name="Buschauer R."/>
            <person name="Ameismeier M."/>
            <person name="Bassler J."/>
            <person name="Beck M."/>
            <person name="Beckmann R."/>
            <person name="Hurt E."/>
        </authorList>
    </citation>
    <scope>STRUCTURE BY ELECTRON MICROSCOPY (4.10 ANGSTROMS) IN COMPLEX WITH MDM2; RPL11 AND 5S RNA</scope>
    <scope>SUBUNIT</scope>
</reference>
<reference key="29">
    <citation type="journal article" date="2009" name="Hum. Mutat.">
        <title>Identification of mutations in the ribosomal protein L5 (RPL5) and ribosomal protein L11 (RPL11) genes in Czech patients with Diamond-Blackfan anemia.</title>
        <authorList>
            <person name="Cmejla R."/>
            <person name="Cmejlova J."/>
            <person name="Handrkova H."/>
            <person name="Petrak J."/>
            <person name="Petrtylova K."/>
            <person name="Mihal V."/>
            <person name="Stary J."/>
            <person name="Cerna Z."/>
            <person name="Jabali Y."/>
            <person name="Pospisilova D."/>
        </authorList>
    </citation>
    <scope>VARIANT DBA6 VAL-285</scope>
</reference>
<name>RL5_HUMAN</name>
<feature type="initiator methionine" description="Removed" evidence="3 24">
    <location>
        <position position="1"/>
    </location>
</feature>
<feature type="chain" id="PRO_0000131431" description="Large ribosomal subunit protein uL18">
    <location>
        <begin position="2"/>
        <end position="297"/>
    </location>
</feature>
<feature type="region of interest" description="Disordered" evidence="2">
    <location>
        <begin position="253"/>
        <end position="297"/>
    </location>
</feature>
<feature type="compositionally biased region" description="Basic residues" evidence="2">
    <location>
        <begin position="258"/>
        <end position="268"/>
    </location>
</feature>
<feature type="modified residue" description="N-acetylglycine" evidence="24">
    <location>
        <position position="2"/>
    </location>
</feature>
<feature type="modified residue" description="N6-acetyllysine" evidence="22">
    <location>
        <position position="5"/>
    </location>
</feature>
<feature type="modified residue" description="N6-acetyllysine" evidence="22">
    <location>
        <position position="48"/>
    </location>
</feature>
<feature type="modified residue" description="Phosphoserine" evidence="25">
    <location>
        <position position="185"/>
    </location>
</feature>
<feature type="modified residue" description="N6-acetyllysine; alternate" evidence="1">
    <location>
        <position position="220"/>
    </location>
</feature>
<feature type="modified residue" description="Phosphothreonine" evidence="25">
    <location>
        <position position="232"/>
    </location>
</feature>
<feature type="modified residue" description="Phosphoserine" evidence="23">
    <location>
        <position position="272"/>
    </location>
</feature>
<feature type="cross-link" description="Glycyl lysine isopeptide (Lys-Gly) (interchain with G-Cter in SUMO1); alternate" evidence="26">
    <location>
        <position position="220"/>
    </location>
</feature>
<feature type="cross-link" description="Glycyl lysine isopeptide (Lys-Gly) (interchain with G-Cter in SUMO2); alternate" evidence="26">
    <location>
        <position position="220"/>
    </location>
</feature>
<feature type="sequence variant" id="VAR_055450" description="In DBA6; dbSNP:rs121434406." evidence="6">
    <original>G</original>
    <variation>S</variation>
    <location>
        <position position="140"/>
    </location>
</feature>
<feature type="sequence variant" id="VAR_052009" description="In dbSNP:rs11540832." evidence="5">
    <original>Y</original>
    <variation>C</variation>
    <location>
        <position position="210"/>
    </location>
</feature>
<feature type="sequence variant" id="VAR_055451" description="In DBA6." evidence="7">
    <original>A</original>
    <variation>V</variation>
    <location>
        <position position="285"/>
    </location>
</feature>
<feature type="sequence conflict" description="In Ref. 1; AAA85654." evidence="15" ref="1">
    <original>A</original>
    <variation>R</variation>
    <location>
        <position position="78"/>
    </location>
</feature>
<feature type="sequence conflict" description="In Ref. 9." evidence="15" ref="9">
    <original>S</original>
    <variation>R</variation>
    <location>
        <position position="176"/>
    </location>
</feature>
<feature type="sequence conflict" description="In Ref. 3; BAD96324." evidence="15" ref="3">
    <original>K</original>
    <variation>E</variation>
    <location>
        <position position="264"/>
    </location>
</feature>
<accession>P46777</accession>
<accession>Q32LZ3</accession>
<accession>Q53HH6</accession>
<accession>Q9H3F4</accession>
<comment type="function">
    <text evidence="3 6 9 10">Component of the ribosome, a large ribonucleoprotein complex responsible for the synthesis of proteins in the cell. The small ribosomal subunit (SSU) binds messenger RNAs (mRNAs) and translates the encoded message by selecting cognate aminoacyl-transfer RNA (tRNA) molecules. The large subunit (LSU) contains the ribosomal catalytic site termed the peptidyl transferase center (PTC), which catalyzes the formation of peptide bonds, thereby polymerizing the amino acids delivered by tRNAs into a polypeptide chain. The nascent polypeptides leave the ribosome through a tunnel in the LSU and interact with protein factors that function in enzymatic processing, targeting, and the membrane insertion of nascent chains at the exit of the ribosomal tunnel. As part of the 5S RNP/5S ribonucleoprotein particle it is an essential component of the LSU, required for its formation and the maturation of rRNAs (PubMed:12962325, PubMed:19061985, PubMed:23636399, PubMed:24120868). It also couples ribosome biogenesis to p53/TP53 activation. As part of the 5S RNP it accumulates in the nucleoplasm and inhibits MDM2, when ribosome biogenesis is perturbed, mediating the stabilization and the activation of TP53 (PubMed:24120868).</text>
</comment>
<comment type="subunit">
    <text evidence="4 8 10 11 12">Component of the large ribosomal subunit (LSU). Part of the 5S RNP complex, which is a LSU subcomplex composed of the 5S RNA, RPL5 and RPL11 (PubMed:24120868, PubMed:37291423). Component of a hexameric 5S RNP precursor complex, composed of 5S RNA, RRS1, RPF2/BXDC1, RPL5, RPL11 and HEATR3; this complex acts as a precursor for ribosome assembly (PubMed:37291423). Interacts with isoform 1 of NVL in an ATP-dependent manner (PubMed:15469983). Interacts with RRP1B (PubMed:20926688). Interacts with IPO5, IPO7 and KPNB1; these interactions may be involved in RPL5 nuclear import for the assembly of ribosomal subunits (PubMed:9687515).</text>
</comment>
<comment type="interaction">
    <interactant intactId="EBI-358018">
        <id>P46777</id>
    </interactant>
    <interactant intactId="EBI-1222919">
        <id>P43146</id>
        <label>DCC</label>
    </interactant>
    <organismsDiffer>false</organismsDiffer>
    <experiments>7</experiments>
</comment>
<comment type="interaction">
    <interactant intactId="EBI-358018">
        <id>P46777</id>
    </interactant>
    <interactant intactId="EBI-389668">
        <id>Q00987</id>
        <label>MDM2</label>
    </interactant>
    <organismsDiffer>false</organismsDiffer>
    <experiments>5</experiments>
</comment>
<comment type="interaction">
    <interactant intactId="EBI-358018">
        <id>P46777</id>
    </interactant>
    <interactant intactId="EBI-353303">
        <id>P62829</id>
        <label>RPL23</label>
    </interactant>
    <organismsDiffer>false</organismsDiffer>
    <experiments>2</experiments>
</comment>
<comment type="interaction">
    <interactant intactId="EBI-358018">
        <id>P46777</id>
    </interactant>
    <interactant intactId="EBI-353072">
        <id>P62266</id>
        <label>RPS23</label>
    </interactant>
    <organismsDiffer>false</organismsDiffer>
    <experiments>2</experiments>
</comment>
<comment type="interaction">
    <interactant intactId="EBI-358018">
        <id>P46777</id>
    </interactant>
    <interactant intactId="EBI-372051">
        <id>Q14684</id>
        <label>RRP1B</label>
    </interactant>
    <organismsDiffer>false</organismsDiffer>
    <experiments>3</experiments>
</comment>
<comment type="interaction">
    <interactant intactId="EBI-358018">
        <id>P46777</id>
    </interactant>
    <interactant intactId="EBI-723863">
        <id>Q15527</id>
        <label>SURF2</label>
    </interactant>
    <organismsDiffer>false</organismsDiffer>
    <experiments>6</experiments>
</comment>
<comment type="interaction">
    <interactant intactId="EBI-358018">
        <id>P46777</id>
    </interactant>
    <interactant intactId="EBI-1798965">
        <id>Q63155</id>
        <label>Dcc</label>
    </interactant>
    <organismsDiffer>true</organismsDiffer>
    <experiments>4</experiments>
</comment>
<comment type="subcellular location">
    <subcellularLocation>
        <location evidence="4 13">Cytoplasm</location>
    </subcellularLocation>
    <subcellularLocation>
        <location evidence="4 13">Nucleus</location>
        <location evidence="4 13">Nucleolus</location>
    </subcellularLocation>
    <text evidence="12">Although RP5 is functional within the cytoplasm, the assembly of ribosomal subunits occurs in the nucleus. RPL5 nuclear import is mediated by IPO5/RanBP5, IPO7/RanBP7, KPNB1/importin-beta or TPNO1/Trn.</text>
</comment>
<comment type="disease" evidence="6 7">
    <disease id="DI-00396">
        <name>Diamond-Blackfan anemia 6</name>
        <acronym>DBA6</acronym>
        <description>A form of Diamond-Blackfan anemia, a congenital non-regenerative hypoplastic anemia that usually presents early in infancy. Diamond-Blackfan anemia is characterized by a moderate to severe macrocytic anemia, erythroblastopenia, and an increased risk of malignancy. 30 to 40% of Diamond-Blackfan anemia patients present with short stature and congenital anomalies, the most frequent being craniofacial (Pierre-Robin syndrome and cleft palate), thumb and urogenital anomalies.</description>
        <dbReference type="MIM" id="612561"/>
    </disease>
    <text>The disease is caused by variants affecting the gene represented in this entry.</text>
</comment>
<comment type="similarity">
    <text evidence="15">Belongs to the universal ribosomal protein uL18 family.</text>
</comment>
<proteinExistence type="evidence at protein level"/>